<accession>A5F9B6</accession>
<accession>C3LX70</accession>
<sequence length="152" mass="17820">MSFDLATCRQSALQLLSRRDHSEYELHQKLALKGHPTEVIDEVVKYVLELGYLSDARYAASQARQIVHKGYGEQRLRQQLKEKRVAEEVIEQALAEQTIDWFELAKEVAHKKFKSGISHERSQYAKQVRYLQYRGFNFEQIRYALQASESDE</sequence>
<keyword id="KW-0963">Cytoplasm</keyword>
<organism>
    <name type="scientific">Vibrio cholerae serotype O1 (strain ATCC 39541 / Classical Ogawa 395 / O395)</name>
    <dbReference type="NCBI Taxonomy" id="345073"/>
    <lineage>
        <taxon>Bacteria</taxon>
        <taxon>Pseudomonadati</taxon>
        <taxon>Pseudomonadota</taxon>
        <taxon>Gammaproteobacteria</taxon>
        <taxon>Vibrionales</taxon>
        <taxon>Vibrionaceae</taxon>
        <taxon>Vibrio</taxon>
    </lineage>
</organism>
<evidence type="ECO:0000255" key="1">
    <source>
        <dbReference type="HAMAP-Rule" id="MF_01114"/>
    </source>
</evidence>
<proteinExistence type="inferred from homology"/>
<gene>
    <name evidence="1" type="primary">recX</name>
    <name type="ordered locus">VC0395_A0071</name>
    <name type="ordered locus">VC395_0561</name>
</gene>
<comment type="function">
    <text evidence="1">Modulates RecA activity.</text>
</comment>
<comment type="subcellular location">
    <subcellularLocation>
        <location evidence="1">Cytoplasm</location>
    </subcellularLocation>
</comment>
<comment type="similarity">
    <text evidence="1">Belongs to the RecX family.</text>
</comment>
<dbReference type="EMBL" id="CP000627">
    <property type="protein sequence ID" value="ABQ20557.1"/>
    <property type="molecule type" value="Genomic_DNA"/>
</dbReference>
<dbReference type="EMBL" id="CP001235">
    <property type="protein sequence ID" value="ACP08580.1"/>
    <property type="molecule type" value="Genomic_DNA"/>
</dbReference>
<dbReference type="RefSeq" id="WP_000006850.1">
    <property type="nucleotide sequence ID" value="NZ_JAACZH010000029.1"/>
</dbReference>
<dbReference type="SMR" id="A5F9B6"/>
<dbReference type="KEGG" id="vco:VC0395_A0071"/>
<dbReference type="KEGG" id="vcr:VC395_0561"/>
<dbReference type="PATRIC" id="fig|345073.21.peg.550"/>
<dbReference type="eggNOG" id="COG2137">
    <property type="taxonomic scope" value="Bacteria"/>
</dbReference>
<dbReference type="HOGENOM" id="CLU_066607_3_2_6"/>
<dbReference type="OrthoDB" id="7066780at2"/>
<dbReference type="Proteomes" id="UP000000249">
    <property type="component" value="Chromosome 2"/>
</dbReference>
<dbReference type="GO" id="GO:0005737">
    <property type="term" value="C:cytoplasm"/>
    <property type="evidence" value="ECO:0007669"/>
    <property type="project" value="UniProtKB-SubCell"/>
</dbReference>
<dbReference type="GO" id="GO:0006282">
    <property type="term" value="P:regulation of DNA repair"/>
    <property type="evidence" value="ECO:0007669"/>
    <property type="project" value="UniProtKB-UniRule"/>
</dbReference>
<dbReference type="FunFam" id="1.10.10.10:FF:000847">
    <property type="entry name" value="Regulatory protein RecX"/>
    <property type="match status" value="1"/>
</dbReference>
<dbReference type="Gene3D" id="1.10.10.10">
    <property type="entry name" value="Winged helix-like DNA-binding domain superfamily/Winged helix DNA-binding domain"/>
    <property type="match status" value="3"/>
</dbReference>
<dbReference type="HAMAP" id="MF_01114">
    <property type="entry name" value="RecX"/>
    <property type="match status" value="1"/>
</dbReference>
<dbReference type="InterPro" id="IPR053926">
    <property type="entry name" value="RecX_HTH_1st"/>
</dbReference>
<dbReference type="InterPro" id="IPR053924">
    <property type="entry name" value="RecX_HTH_2nd"/>
</dbReference>
<dbReference type="InterPro" id="IPR053925">
    <property type="entry name" value="RecX_HTH_3rd"/>
</dbReference>
<dbReference type="InterPro" id="IPR003783">
    <property type="entry name" value="Regulatory_RecX"/>
</dbReference>
<dbReference type="InterPro" id="IPR036388">
    <property type="entry name" value="WH-like_DNA-bd_sf"/>
</dbReference>
<dbReference type="NCBIfam" id="NF001057">
    <property type="entry name" value="PRK00117.3-3"/>
    <property type="match status" value="1"/>
</dbReference>
<dbReference type="PANTHER" id="PTHR33602">
    <property type="entry name" value="REGULATORY PROTEIN RECX FAMILY PROTEIN"/>
    <property type="match status" value="1"/>
</dbReference>
<dbReference type="PANTHER" id="PTHR33602:SF1">
    <property type="entry name" value="REGULATORY PROTEIN RECX FAMILY PROTEIN"/>
    <property type="match status" value="1"/>
</dbReference>
<dbReference type="Pfam" id="PF21982">
    <property type="entry name" value="RecX_HTH1"/>
    <property type="match status" value="1"/>
</dbReference>
<dbReference type="Pfam" id="PF02631">
    <property type="entry name" value="RecX_HTH2"/>
    <property type="match status" value="1"/>
</dbReference>
<dbReference type="Pfam" id="PF21981">
    <property type="entry name" value="RecX_HTH3"/>
    <property type="match status" value="1"/>
</dbReference>
<feature type="chain" id="PRO_1000073035" description="Regulatory protein RecX">
    <location>
        <begin position="1"/>
        <end position="152"/>
    </location>
</feature>
<protein>
    <recommendedName>
        <fullName evidence="1">Regulatory protein RecX</fullName>
    </recommendedName>
</protein>
<name>RECX_VIBC3</name>
<reference key="1">
    <citation type="submission" date="2007-03" db="EMBL/GenBank/DDBJ databases">
        <authorList>
            <person name="Heidelberg J."/>
        </authorList>
    </citation>
    <scope>NUCLEOTIDE SEQUENCE [LARGE SCALE GENOMIC DNA]</scope>
    <source>
        <strain>ATCC 39541 / Classical Ogawa 395 / O395</strain>
    </source>
</reference>
<reference key="2">
    <citation type="journal article" date="2008" name="PLoS ONE">
        <title>A recalibrated molecular clock and independent origins for the cholera pandemic clones.</title>
        <authorList>
            <person name="Feng L."/>
            <person name="Reeves P.R."/>
            <person name="Lan R."/>
            <person name="Ren Y."/>
            <person name="Gao C."/>
            <person name="Zhou Z."/>
            <person name="Ren Y."/>
            <person name="Cheng J."/>
            <person name="Wang W."/>
            <person name="Wang J."/>
            <person name="Qian W."/>
            <person name="Li D."/>
            <person name="Wang L."/>
        </authorList>
    </citation>
    <scope>NUCLEOTIDE SEQUENCE [LARGE SCALE GENOMIC DNA]</scope>
    <source>
        <strain>ATCC 39541 / Classical Ogawa 395 / O395</strain>
    </source>
</reference>